<dbReference type="EMBL" id="CP000408">
    <property type="protein sequence ID" value="ABP93319.1"/>
    <property type="molecule type" value="Genomic_DNA"/>
</dbReference>
<dbReference type="SMR" id="A4W4N0"/>
<dbReference type="KEGG" id="ssv:SSU98_2161"/>
<dbReference type="HOGENOM" id="CLU_007831_2_2_9"/>
<dbReference type="GO" id="GO:0005829">
    <property type="term" value="C:cytosol"/>
    <property type="evidence" value="ECO:0007669"/>
    <property type="project" value="TreeGrafter"/>
</dbReference>
<dbReference type="GO" id="GO:0050660">
    <property type="term" value="F:flavin adenine dinucleotide binding"/>
    <property type="evidence" value="ECO:0007669"/>
    <property type="project" value="UniProtKB-UniRule"/>
</dbReference>
<dbReference type="GO" id="GO:0030488">
    <property type="term" value="P:tRNA methylation"/>
    <property type="evidence" value="ECO:0007669"/>
    <property type="project" value="TreeGrafter"/>
</dbReference>
<dbReference type="GO" id="GO:0002098">
    <property type="term" value="P:tRNA wobble uridine modification"/>
    <property type="evidence" value="ECO:0007669"/>
    <property type="project" value="InterPro"/>
</dbReference>
<dbReference type="FunFam" id="1.10.10.1800:FF:000001">
    <property type="entry name" value="tRNA uridine 5-carboxymethylaminomethyl modification enzyme MnmG"/>
    <property type="match status" value="1"/>
</dbReference>
<dbReference type="FunFam" id="1.10.150.570:FF:000001">
    <property type="entry name" value="tRNA uridine 5-carboxymethylaminomethyl modification enzyme MnmG"/>
    <property type="match status" value="1"/>
</dbReference>
<dbReference type="FunFam" id="3.50.50.60:FF:000002">
    <property type="entry name" value="tRNA uridine 5-carboxymethylaminomethyl modification enzyme MnmG"/>
    <property type="match status" value="1"/>
</dbReference>
<dbReference type="FunFam" id="3.50.50.60:FF:000063">
    <property type="entry name" value="tRNA uridine 5-carboxymethylaminomethyl modification enzyme MnmG"/>
    <property type="match status" value="1"/>
</dbReference>
<dbReference type="Gene3D" id="3.50.50.60">
    <property type="entry name" value="FAD/NAD(P)-binding domain"/>
    <property type="match status" value="2"/>
</dbReference>
<dbReference type="Gene3D" id="1.10.150.570">
    <property type="entry name" value="GidA associated domain, C-terminal subdomain"/>
    <property type="match status" value="1"/>
</dbReference>
<dbReference type="Gene3D" id="1.10.10.1800">
    <property type="entry name" value="tRNA uridine 5-carboxymethylaminomethyl modification enzyme MnmG/GidA"/>
    <property type="match status" value="1"/>
</dbReference>
<dbReference type="HAMAP" id="MF_00129">
    <property type="entry name" value="MnmG_GidA"/>
    <property type="match status" value="1"/>
</dbReference>
<dbReference type="InterPro" id="IPR036188">
    <property type="entry name" value="FAD/NAD-bd_sf"/>
</dbReference>
<dbReference type="InterPro" id="IPR049312">
    <property type="entry name" value="GIDA_C_N"/>
</dbReference>
<dbReference type="InterPro" id="IPR004416">
    <property type="entry name" value="MnmG"/>
</dbReference>
<dbReference type="InterPro" id="IPR002218">
    <property type="entry name" value="MnmG-rel"/>
</dbReference>
<dbReference type="InterPro" id="IPR020595">
    <property type="entry name" value="MnmG-rel_CS"/>
</dbReference>
<dbReference type="InterPro" id="IPR026904">
    <property type="entry name" value="MnmG_C"/>
</dbReference>
<dbReference type="InterPro" id="IPR047001">
    <property type="entry name" value="MnmG_C_subdom"/>
</dbReference>
<dbReference type="InterPro" id="IPR044920">
    <property type="entry name" value="MnmG_C_subdom_sf"/>
</dbReference>
<dbReference type="InterPro" id="IPR040131">
    <property type="entry name" value="MnmG_N"/>
</dbReference>
<dbReference type="NCBIfam" id="TIGR00136">
    <property type="entry name" value="mnmG_gidA"/>
    <property type="match status" value="1"/>
</dbReference>
<dbReference type="PANTHER" id="PTHR11806">
    <property type="entry name" value="GLUCOSE INHIBITED DIVISION PROTEIN A"/>
    <property type="match status" value="1"/>
</dbReference>
<dbReference type="PANTHER" id="PTHR11806:SF0">
    <property type="entry name" value="PROTEIN MTO1 HOMOLOG, MITOCHONDRIAL"/>
    <property type="match status" value="1"/>
</dbReference>
<dbReference type="Pfam" id="PF01134">
    <property type="entry name" value="GIDA"/>
    <property type="match status" value="1"/>
</dbReference>
<dbReference type="Pfam" id="PF21680">
    <property type="entry name" value="GIDA_C_1st"/>
    <property type="match status" value="1"/>
</dbReference>
<dbReference type="Pfam" id="PF13932">
    <property type="entry name" value="SAM_GIDA_C"/>
    <property type="match status" value="1"/>
</dbReference>
<dbReference type="PRINTS" id="PR00411">
    <property type="entry name" value="PNDRDTASEI"/>
</dbReference>
<dbReference type="SMART" id="SM01228">
    <property type="entry name" value="GIDA_assoc_3"/>
    <property type="match status" value="1"/>
</dbReference>
<dbReference type="SUPFAM" id="SSF51905">
    <property type="entry name" value="FAD/NAD(P)-binding domain"/>
    <property type="match status" value="1"/>
</dbReference>
<dbReference type="PROSITE" id="PS01280">
    <property type="entry name" value="GIDA_1"/>
    <property type="match status" value="1"/>
</dbReference>
<dbReference type="PROSITE" id="PS01281">
    <property type="entry name" value="GIDA_2"/>
    <property type="match status" value="1"/>
</dbReference>
<proteinExistence type="inferred from homology"/>
<comment type="function">
    <text evidence="1">NAD-binding protein involved in the addition of a carboxymethylaminomethyl (cmnm) group at the wobble position (U34) of certain tRNAs, forming tRNA-cmnm(5)s(2)U34.</text>
</comment>
<comment type="cofactor">
    <cofactor evidence="1">
        <name>FAD</name>
        <dbReference type="ChEBI" id="CHEBI:57692"/>
    </cofactor>
</comment>
<comment type="subunit">
    <text evidence="1">Homodimer. Heterotetramer of two MnmE and two MnmG subunits.</text>
</comment>
<comment type="subcellular location">
    <subcellularLocation>
        <location evidence="1">Cytoplasm</location>
    </subcellularLocation>
</comment>
<comment type="similarity">
    <text evidence="1">Belongs to the MnmG family.</text>
</comment>
<feature type="chain" id="PRO_1000016695" description="tRNA uridine 5-carboxymethylaminomethyl modification enzyme MnmG">
    <location>
        <begin position="1"/>
        <end position="638"/>
    </location>
</feature>
<feature type="binding site" evidence="1">
    <location>
        <begin position="15"/>
        <end position="20"/>
    </location>
    <ligand>
        <name>FAD</name>
        <dbReference type="ChEBI" id="CHEBI:57692"/>
    </ligand>
</feature>
<feature type="binding site" evidence="1">
    <location>
        <position position="127"/>
    </location>
    <ligand>
        <name>FAD</name>
        <dbReference type="ChEBI" id="CHEBI:57692"/>
    </ligand>
</feature>
<feature type="binding site" evidence="1">
    <location>
        <position position="182"/>
    </location>
    <ligand>
        <name>FAD</name>
        <dbReference type="ChEBI" id="CHEBI:57692"/>
    </ligand>
</feature>
<feature type="binding site" evidence="1">
    <location>
        <begin position="276"/>
        <end position="290"/>
    </location>
    <ligand>
        <name>NAD(+)</name>
        <dbReference type="ChEBI" id="CHEBI:57540"/>
    </ligand>
</feature>
<feature type="binding site" evidence="1">
    <location>
        <position position="373"/>
    </location>
    <ligand>
        <name>FAD</name>
        <dbReference type="ChEBI" id="CHEBI:57692"/>
    </ligand>
</feature>
<accession>A4W4N0</accession>
<keyword id="KW-0963">Cytoplasm</keyword>
<keyword id="KW-0274">FAD</keyword>
<keyword id="KW-0285">Flavoprotein</keyword>
<keyword id="KW-0520">NAD</keyword>
<keyword id="KW-0819">tRNA processing</keyword>
<sequence>MTHTFAENYDVIVIGAGHAGVEAGLAASRMGCKTLLATINLDMVAFMPCNPSIGGSAKGIVVREIDALGGEMGRNIDKTYIQMKMLNMGKGPAVRALRAQADKAEYASEMKRTVERQENLTLRQTMIDEILVEDGKVIGVRTATNQKFSAKAVVVTTGTALRGEIIIGDLKYSSGPNNSLASITLADNLKELGLEIGRFKTGTPPRVNARTINYEDTEIQPGDEKPNHFSFLSKDEDYLLDQIPCWLTYTNATSHEIINSNLHRAPMFSGIVKGIGPRYCPSIEDKIVRFADKERHQLFLEPEGRNTDEIYVQGLSTSLPEDVQQDLIHSIKGLENAQMMRTGYAIEYDMVMPHQLRATLETKKISGLFTAGQTNGTSGYEEAAGQGIVAGINAALKVQGKPELILKRSDGYIGVMIDDLVTKGTVEPYRLLTSRAEYRLILRHDNADMRLTEIGRQVGLVDDERWQVFQIHKNQFDNEMKRLESIKLKPIKETNEKVVAMGFKPLTDALTAKEFMRRPDVTYADAVAFIGPAAEDLDAKTIELIETEVKYEGYIAKALDQVEKMKRMEEKRIPADIDWDDIDSIATEARQKFKLISPETIGQASRISGVNPADISILMVYLEGRSRSISKNKSKDSH</sequence>
<name>MNMG_STRS2</name>
<gene>
    <name evidence="1" type="primary">mnmG</name>
    <name evidence="1" type="synonym">gidA</name>
    <name type="ordered locus">SSU98_2161</name>
</gene>
<evidence type="ECO:0000255" key="1">
    <source>
        <dbReference type="HAMAP-Rule" id="MF_00129"/>
    </source>
</evidence>
<protein>
    <recommendedName>
        <fullName evidence="1">tRNA uridine 5-carboxymethylaminomethyl modification enzyme MnmG</fullName>
    </recommendedName>
    <alternativeName>
        <fullName evidence="1">Glucose-inhibited division protein A</fullName>
    </alternativeName>
</protein>
<reference key="1">
    <citation type="journal article" date="2007" name="PLoS ONE">
        <title>A glimpse of streptococcal toxic shock syndrome from comparative genomics of S. suis 2 Chinese isolates.</title>
        <authorList>
            <person name="Chen C."/>
            <person name="Tang J."/>
            <person name="Dong W."/>
            <person name="Wang C."/>
            <person name="Feng Y."/>
            <person name="Wang J."/>
            <person name="Zheng F."/>
            <person name="Pan X."/>
            <person name="Liu D."/>
            <person name="Li M."/>
            <person name="Song Y."/>
            <person name="Zhu X."/>
            <person name="Sun H."/>
            <person name="Feng T."/>
            <person name="Guo Z."/>
            <person name="Ju A."/>
            <person name="Ge J."/>
            <person name="Dong Y."/>
            <person name="Sun W."/>
            <person name="Jiang Y."/>
            <person name="Wang J."/>
            <person name="Yan J."/>
            <person name="Yang H."/>
            <person name="Wang X."/>
            <person name="Gao G.F."/>
            <person name="Yang R."/>
            <person name="Wang J."/>
            <person name="Yu J."/>
        </authorList>
    </citation>
    <scope>NUCLEOTIDE SEQUENCE [LARGE SCALE GENOMIC DNA]</scope>
    <source>
        <strain>98HAH33</strain>
    </source>
</reference>
<organism>
    <name type="scientific">Streptococcus suis (strain 98HAH33)</name>
    <dbReference type="NCBI Taxonomy" id="391296"/>
    <lineage>
        <taxon>Bacteria</taxon>
        <taxon>Bacillati</taxon>
        <taxon>Bacillota</taxon>
        <taxon>Bacilli</taxon>
        <taxon>Lactobacillales</taxon>
        <taxon>Streptococcaceae</taxon>
        <taxon>Streptococcus</taxon>
    </lineage>
</organism>